<name>MINC_WIGBR</name>
<keyword id="KW-0131">Cell cycle</keyword>
<keyword id="KW-0132">Cell division</keyword>
<keyword id="KW-1185">Reference proteome</keyword>
<keyword id="KW-0717">Septation</keyword>
<comment type="function">
    <text evidence="1">Cell division inhibitor that blocks the formation of polar Z ring septums. Rapidly oscillates between the poles of the cell to destabilize FtsZ filaments that have formed before they mature into polar Z rings. Prevents FtsZ polymerization.</text>
</comment>
<comment type="subunit">
    <text evidence="1">Interacts with MinD and FtsZ.</text>
</comment>
<comment type="similarity">
    <text evidence="1">Belongs to the MinC family.</text>
</comment>
<sequence>MIILDINQNYKYFMFNKVCLKFKIKNFNILVIYLYDIKEKNIYKTIKNKIKNFSYFFKKMPCIINIKYLSEEDQYFWKYFHKKLSNLGLCIIGVSGCNNKIWEKIITRNGLLIFKEQINKKIFYEKKNKITKINNNYIIDKPIRSGQTIYAKKKNLIIMNTVNSGAEVIADGDIHIYGIMRGRASAGASKDTKSQIFCTKLYAEFISIAGKNWINENVLNSYLGKPVRFYIKNDILTIQKFSL</sequence>
<proteinExistence type="inferred from homology"/>
<dbReference type="EMBL" id="BA000021">
    <property type="protein sequence ID" value="BAC24521.1"/>
    <property type="molecule type" value="Genomic_DNA"/>
</dbReference>
<dbReference type="SMR" id="Q8D2H9"/>
<dbReference type="STRING" id="36870.gene:10368875"/>
<dbReference type="KEGG" id="wbr:minC"/>
<dbReference type="eggNOG" id="COG0850">
    <property type="taxonomic scope" value="Bacteria"/>
</dbReference>
<dbReference type="HOGENOM" id="CLU_067812_0_1_6"/>
<dbReference type="OrthoDB" id="9794530at2"/>
<dbReference type="Proteomes" id="UP000000562">
    <property type="component" value="Chromosome"/>
</dbReference>
<dbReference type="GO" id="GO:0000902">
    <property type="term" value="P:cell morphogenesis"/>
    <property type="evidence" value="ECO:0007669"/>
    <property type="project" value="InterPro"/>
</dbReference>
<dbReference type="GO" id="GO:0000917">
    <property type="term" value="P:division septum assembly"/>
    <property type="evidence" value="ECO:0007669"/>
    <property type="project" value="UniProtKB-KW"/>
</dbReference>
<dbReference type="GO" id="GO:0051302">
    <property type="term" value="P:regulation of cell division"/>
    <property type="evidence" value="ECO:0007669"/>
    <property type="project" value="InterPro"/>
</dbReference>
<dbReference type="GO" id="GO:1901891">
    <property type="term" value="P:regulation of cell septum assembly"/>
    <property type="evidence" value="ECO:0007669"/>
    <property type="project" value="InterPro"/>
</dbReference>
<dbReference type="Gene3D" id="2.160.20.70">
    <property type="match status" value="1"/>
</dbReference>
<dbReference type="Gene3D" id="3.30.70.260">
    <property type="match status" value="1"/>
</dbReference>
<dbReference type="HAMAP" id="MF_00267">
    <property type="entry name" value="MinC"/>
    <property type="match status" value="1"/>
</dbReference>
<dbReference type="InterPro" id="IPR016098">
    <property type="entry name" value="CAP/MinC_C"/>
</dbReference>
<dbReference type="InterPro" id="IPR013033">
    <property type="entry name" value="MinC"/>
</dbReference>
<dbReference type="InterPro" id="IPR036145">
    <property type="entry name" value="MinC_C_sf"/>
</dbReference>
<dbReference type="InterPro" id="IPR007874">
    <property type="entry name" value="MinC_N"/>
</dbReference>
<dbReference type="InterPro" id="IPR005526">
    <property type="entry name" value="Septum_form_inhib_MinC_C"/>
</dbReference>
<dbReference type="NCBIfam" id="TIGR01222">
    <property type="entry name" value="minC"/>
    <property type="match status" value="1"/>
</dbReference>
<dbReference type="PANTHER" id="PTHR34108">
    <property type="entry name" value="SEPTUM SITE-DETERMINING PROTEIN MINC"/>
    <property type="match status" value="1"/>
</dbReference>
<dbReference type="PANTHER" id="PTHR34108:SF1">
    <property type="entry name" value="SEPTUM SITE-DETERMINING PROTEIN MINC"/>
    <property type="match status" value="1"/>
</dbReference>
<dbReference type="Pfam" id="PF03775">
    <property type="entry name" value="MinC_C"/>
    <property type="match status" value="1"/>
</dbReference>
<dbReference type="Pfam" id="PF05209">
    <property type="entry name" value="MinC_N"/>
    <property type="match status" value="1"/>
</dbReference>
<dbReference type="SUPFAM" id="SSF63848">
    <property type="entry name" value="Cell-division inhibitor MinC, C-terminal domain"/>
    <property type="match status" value="1"/>
</dbReference>
<organism>
    <name type="scientific">Wigglesworthia glossinidia brevipalpis</name>
    <dbReference type="NCBI Taxonomy" id="36870"/>
    <lineage>
        <taxon>Bacteria</taxon>
        <taxon>Pseudomonadati</taxon>
        <taxon>Pseudomonadota</taxon>
        <taxon>Gammaproteobacteria</taxon>
        <taxon>Enterobacterales</taxon>
        <taxon>Erwiniaceae</taxon>
        <taxon>Wigglesworthia</taxon>
    </lineage>
</organism>
<accession>Q8D2H9</accession>
<reference key="1">
    <citation type="journal article" date="2002" name="Nat. Genet.">
        <title>Genome sequence of the endocellular obligate symbiont of tsetse flies, Wigglesworthia glossinidia.</title>
        <authorList>
            <person name="Akman L."/>
            <person name="Yamashita A."/>
            <person name="Watanabe H."/>
            <person name="Oshima K."/>
            <person name="Shiba T."/>
            <person name="Hattori M."/>
            <person name="Aksoy S."/>
        </authorList>
    </citation>
    <scope>NUCLEOTIDE SEQUENCE [LARGE SCALE GENOMIC DNA]</scope>
</reference>
<evidence type="ECO:0000255" key="1">
    <source>
        <dbReference type="HAMAP-Rule" id="MF_00267"/>
    </source>
</evidence>
<protein>
    <recommendedName>
        <fullName evidence="1">Probable septum site-determining protein MinC</fullName>
    </recommendedName>
</protein>
<feature type="chain" id="PRO_0000189072" description="Probable septum site-determining protein MinC">
    <location>
        <begin position="1"/>
        <end position="243"/>
    </location>
</feature>
<gene>
    <name evidence="1" type="primary">minC</name>
    <name type="ordered locus">WIGBR3750</name>
</gene>